<name>Y1222_ARATH</name>
<accession>Q9FVR6</accession>
<gene>
    <name type="ordered locus">At1g32220</name>
    <name type="ORF">F3C3.2</name>
</gene>
<feature type="transit peptide" description="Chloroplast" evidence="1">
    <location>
        <begin position="1"/>
        <end position="57"/>
    </location>
</feature>
<feature type="chain" id="PRO_0000286518" description="Uncharacterized protein At1g32220, chloroplastic">
    <location>
        <begin position="58"/>
        <end position="296"/>
    </location>
</feature>
<keyword id="KW-0150">Chloroplast</keyword>
<keyword id="KW-0934">Plastid</keyword>
<keyword id="KW-1185">Reference proteome</keyword>
<keyword id="KW-0809">Transit peptide</keyword>
<dbReference type="EMBL" id="AC084165">
    <property type="protein sequence ID" value="AAG23446.1"/>
    <property type="molecule type" value="Genomic_DNA"/>
</dbReference>
<dbReference type="EMBL" id="CP002684">
    <property type="protein sequence ID" value="AEE31450.1"/>
    <property type="molecule type" value="Genomic_DNA"/>
</dbReference>
<dbReference type="EMBL" id="BT000398">
    <property type="protein sequence ID" value="AAN15717.1"/>
    <property type="molecule type" value="mRNA"/>
</dbReference>
<dbReference type="EMBL" id="AY136322">
    <property type="protein sequence ID" value="AAM96988.1"/>
    <property type="molecule type" value="mRNA"/>
</dbReference>
<dbReference type="EMBL" id="AY087370">
    <property type="protein sequence ID" value="AAM64920.1"/>
    <property type="molecule type" value="mRNA"/>
</dbReference>
<dbReference type="PIR" id="G86446">
    <property type="entry name" value="G86446"/>
</dbReference>
<dbReference type="RefSeq" id="NP_564390.1">
    <property type="nucleotide sequence ID" value="NM_102955.4"/>
</dbReference>
<dbReference type="SMR" id="Q9FVR6"/>
<dbReference type="FunCoup" id="Q9FVR6">
    <property type="interactions" value="563"/>
</dbReference>
<dbReference type="STRING" id="3702.Q9FVR6"/>
<dbReference type="iPTMnet" id="Q9FVR6"/>
<dbReference type="PaxDb" id="3702-AT1G32220.1"/>
<dbReference type="ProteomicsDB" id="243182"/>
<dbReference type="EnsemblPlants" id="AT1G32220.1">
    <property type="protein sequence ID" value="AT1G32220.1"/>
    <property type="gene ID" value="AT1G32220"/>
</dbReference>
<dbReference type="GeneID" id="840114"/>
<dbReference type="Gramene" id="AT1G32220.1">
    <property type="protein sequence ID" value="AT1G32220.1"/>
    <property type="gene ID" value="AT1G32220"/>
</dbReference>
<dbReference type="KEGG" id="ath:AT1G32220"/>
<dbReference type="Araport" id="AT1G32220"/>
<dbReference type="TAIR" id="AT1G32220"/>
<dbReference type="eggNOG" id="KOG4288">
    <property type="taxonomic scope" value="Eukaryota"/>
</dbReference>
<dbReference type="HOGENOM" id="CLU_056467_0_0_1"/>
<dbReference type="InParanoid" id="Q9FVR6"/>
<dbReference type="OMA" id="WERADIF"/>
<dbReference type="PhylomeDB" id="Q9FVR6"/>
<dbReference type="PRO" id="PR:Q9FVR6"/>
<dbReference type="Proteomes" id="UP000006548">
    <property type="component" value="Chromosome 1"/>
</dbReference>
<dbReference type="ExpressionAtlas" id="Q9FVR6">
    <property type="expression patterns" value="baseline and differential"/>
</dbReference>
<dbReference type="GO" id="GO:0009507">
    <property type="term" value="C:chloroplast"/>
    <property type="evidence" value="ECO:0007005"/>
    <property type="project" value="TAIR"/>
</dbReference>
<dbReference type="GO" id="GO:0005634">
    <property type="term" value="C:nucleus"/>
    <property type="evidence" value="ECO:0007005"/>
    <property type="project" value="TAIR"/>
</dbReference>
<dbReference type="GO" id="GO:0010287">
    <property type="term" value="C:plastoglobule"/>
    <property type="evidence" value="ECO:0007005"/>
    <property type="project" value="TAIR"/>
</dbReference>
<dbReference type="GO" id="GO:0009579">
    <property type="term" value="C:thylakoid"/>
    <property type="evidence" value="ECO:0007005"/>
    <property type="project" value="TAIR"/>
</dbReference>
<dbReference type="GO" id="GO:0006979">
    <property type="term" value="P:response to oxidative stress"/>
    <property type="evidence" value="ECO:0000315"/>
    <property type="project" value="TAIR"/>
</dbReference>
<dbReference type="FunFam" id="3.40.50.720:FF:000349">
    <property type="entry name" value="Uncharacterized protein At1g32220, chloroplastic"/>
    <property type="match status" value="1"/>
</dbReference>
<dbReference type="Gene3D" id="3.40.50.720">
    <property type="entry name" value="NAD(P)-binding Rossmann-like Domain"/>
    <property type="match status" value="1"/>
</dbReference>
<dbReference type="InterPro" id="IPR051207">
    <property type="entry name" value="ComplexI_NDUFA9_subunit"/>
</dbReference>
<dbReference type="InterPro" id="IPR016040">
    <property type="entry name" value="NAD(P)-bd_dom"/>
</dbReference>
<dbReference type="InterPro" id="IPR036291">
    <property type="entry name" value="NAD(P)-bd_dom_sf"/>
</dbReference>
<dbReference type="PANTHER" id="PTHR12126">
    <property type="entry name" value="NADH-UBIQUINONE OXIDOREDUCTASE 39 KDA SUBUNIT-RELATED"/>
    <property type="match status" value="1"/>
</dbReference>
<dbReference type="PANTHER" id="PTHR12126:SF5">
    <property type="entry name" value="OS04G0403500 PROTEIN"/>
    <property type="match status" value="1"/>
</dbReference>
<dbReference type="Pfam" id="PF13460">
    <property type="entry name" value="NAD_binding_10"/>
    <property type="match status" value="1"/>
</dbReference>
<dbReference type="SUPFAM" id="SSF51735">
    <property type="entry name" value="NAD(P)-binding Rossmann-fold domains"/>
    <property type="match status" value="1"/>
</dbReference>
<comment type="subcellular location">
    <subcellularLocation>
        <location evidence="2 3">Plastid</location>
        <location evidence="2 3">Chloroplast</location>
        <location evidence="2 3">Plastoglobule</location>
    </subcellularLocation>
</comment>
<comment type="similarity">
    <text evidence="4">Belongs to the NAD(P)-dependent epimerase/dehydratase family.</text>
</comment>
<proteinExistence type="evidence at protein level"/>
<sequence>MTSFLSFSAISAHPPTFSGASFRPRSFSPRLFKSCVKCTYAEAGLSSASWSAPIDIVADVKSERVVVLGGNGFVGSAICKAAISNGIEVVSVSRSGRPNFEDSWLDQVTWVTGDVFYLNWDEVLLGATAVVSTIGGFGNEEQMKRINGEANVTAVNAAKDFGVPKFVLITVHDYNLPPFILSNGYFTGKRNAEAELLSKYPTSGVVLRPGFIYGKRKVNGIEVPLDLVGEPLDKIYDSAERFIRPLRSLPASDLILAPPVNVDDLALAVINAVKDDDFFGIFTIEQIKEAAAKMRA</sequence>
<organism>
    <name type="scientific">Arabidopsis thaliana</name>
    <name type="common">Mouse-ear cress</name>
    <dbReference type="NCBI Taxonomy" id="3702"/>
    <lineage>
        <taxon>Eukaryota</taxon>
        <taxon>Viridiplantae</taxon>
        <taxon>Streptophyta</taxon>
        <taxon>Embryophyta</taxon>
        <taxon>Tracheophyta</taxon>
        <taxon>Spermatophyta</taxon>
        <taxon>Magnoliopsida</taxon>
        <taxon>eudicotyledons</taxon>
        <taxon>Gunneridae</taxon>
        <taxon>Pentapetalae</taxon>
        <taxon>rosids</taxon>
        <taxon>malvids</taxon>
        <taxon>Brassicales</taxon>
        <taxon>Brassicaceae</taxon>
        <taxon>Camelineae</taxon>
        <taxon>Arabidopsis</taxon>
    </lineage>
</organism>
<reference key="1">
    <citation type="journal article" date="2000" name="Nature">
        <title>Sequence and analysis of chromosome 1 of the plant Arabidopsis thaliana.</title>
        <authorList>
            <person name="Theologis A."/>
            <person name="Ecker J.R."/>
            <person name="Palm C.J."/>
            <person name="Federspiel N.A."/>
            <person name="Kaul S."/>
            <person name="White O."/>
            <person name="Alonso J."/>
            <person name="Altafi H."/>
            <person name="Araujo R."/>
            <person name="Bowman C.L."/>
            <person name="Brooks S.Y."/>
            <person name="Buehler E."/>
            <person name="Chan A."/>
            <person name="Chao Q."/>
            <person name="Chen H."/>
            <person name="Cheuk R.F."/>
            <person name="Chin C.W."/>
            <person name="Chung M.K."/>
            <person name="Conn L."/>
            <person name="Conway A.B."/>
            <person name="Conway A.R."/>
            <person name="Creasy T.H."/>
            <person name="Dewar K."/>
            <person name="Dunn P."/>
            <person name="Etgu P."/>
            <person name="Feldblyum T.V."/>
            <person name="Feng J.-D."/>
            <person name="Fong B."/>
            <person name="Fujii C.Y."/>
            <person name="Gill J.E."/>
            <person name="Goldsmith A.D."/>
            <person name="Haas B."/>
            <person name="Hansen N.F."/>
            <person name="Hughes B."/>
            <person name="Huizar L."/>
            <person name="Hunter J.L."/>
            <person name="Jenkins J."/>
            <person name="Johnson-Hopson C."/>
            <person name="Khan S."/>
            <person name="Khaykin E."/>
            <person name="Kim C.J."/>
            <person name="Koo H.L."/>
            <person name="Kremenetskaia I."/>
            <person name="Kurtz D.B."/>
            <person name="Kwan A."/>
            <person name="Lam B."/>
            <person name="Langin-Hooper S."/>
            <person name="Lee A."/>
            <person name="Lee J.M."/>
            <person name="Lenz C.A."/>
            <person name="Li J.H."/>
            <person name="Li Y.-P."/>
            <person name="Lin X."/>
            <person name="Liu S.X."/>
            <person name="Liu Z.A."/>
            <person name="Luros J.S."/>
            <person name="Maiti R."/>
            <person name="Marziali A."/>
            <person name="Militscher J."/>
            <person name="Miranda M."/>
            <person name="Nguyen M."/>
            <person name="Nierman W.C."/>
            <person name="Osborne B.I."/>
            <person name="Pai G."/>
            <person name="Peterson J."/>
            <person name="Pham P.K."/>
            <person name="Rizzo M."/>
            <person name="Rooney T."/>
            <person name="Rowley D."/>
            <person name="Sakano H."/>
            <person name="Salzberg S.L."/>
            <person name="Schwartz J.R."/>
            <person name="Shinn P."/>
            <person name="Southwick A.M."/>
            <person name="Sun H."/>
            <person name="Tallon L.J."/>
            <person name="Tambunga G."/>
            <person name="Toriumi M.J."/>
            <person name="Town C.D."/>
            <person name="Utterback T."/>
            <person name="Van Aken S."/>
            <person name="Vaysberg M."/>
            <person name="Vysotskaia V.S."/>
            <person name="Walker M."/>
            <person name="Wu D."/>
            <person name="Yu G."/>
            <person name="Fraser C.M."/>
            <person name="Venter J.C."/>
            <person name="Davis R.W."/>
        </authorList>
    </citation>
    <scope>NUCLEOTIDE SEQUENCE [LARGE SCALE GENOMIC DNA]</scope>
    <source>
        <strain>cv. Columbia</strain>
    </source>
</reference>
<reference key="2">
    <citation type="journal article" date="2017" name="Plant J.">
        <title>Araport11: a complete reannotation of the Arabidopsis thaliana reference genome.</title>
        <authorList>
            <person name="Cheng C.Y."/>
            <person name="Krishnakumar V."/>
            <person name="Chan A.P."/>
            <person name="Thibaud-Nissen F."/>
            <person name="Schobel S."/>
            <person name="Town C.D."/>
        </authorList>
    </citation>
    <scope>GENOME REANNOTATION</scope>
    <source>
        <strain>cv. Columbia</strain>
    </source>
</reference>
<reference key="3">
    <citation type="journal article" date="2003" name="Science">
        <title>Empirical analysis of transcriptional activity in the Arabidopsis genome.</title>
        <authorList>
            <person name="Yamada K."/>
            <person name="Lim J."/>
            <person name="Dale J.M."/>
            <person name="Chen H."/>
            <person name="Shinn P."/>
            <person name="Palm C.J."/>
            <person name="Southwick A.M."/>
            <person name="Wu H.C."/>
            <person name="Kim C.J."/>
            <person name="Nguyen M."/>
            <person name="Pham P.K."/>
            <person name="Cheuk R.F."/>
            <person name="Karlin-Newmann G."/>
            <person name="Liu S.X."/>
            <person name="Lam B."/>
            <person name="Sakano H."/>
            <person name="Wu T."/>
            <person name="Yu G."/>
            <person name="Miranda M."/>
            <person name="Quach H.L."/>
            <person name="Tripp M."/>
            <person name="Chang C.H."/>
            <person name="Lee J.M."/>
            <person name="Toriumi M.J."/>
            <person name="Chan M.M."/>
            <person name="Tang C.C."/>
            <person name="Onodera C.S."/>
            <person name="Deng J.M."/>
            <person name="Akiyama K."/>
            <person name="Ansari Y."/>
            <person name="Arakawa T."/>
            <person name="Banh J."/>
            <person name="Banno F."/>
            <person name="Bowser L."/>
            <person name="Brooks S.Y."/>
            <person name="Carninci P."/>
            <person name="Chao Q."/>
            <person name="Choy N."/>
            <person name="Enju A."/>
            <person name="Goldsmith A.D."/>
            <person name="Gurjal M."/>
            <person name="Hansen N.F."/>
            <person name="Hayashizaki Y."/>
            <person name="Johnson-Hopson C."/>
            <person name="Hsuan V.W."/>
            <person name="Iida K."/>
            <person name="Karnes M."/>
            <person name="Khan S."/>
            <person name="Koesema E."/>
            <person name="Ishida J."/>
            <person name="Jiang P.X."/>
            <person name="Jones T."/>
            <person name="Kawai J."/>
            <person name="Kamiya A."/>
            <person name="Meyers C."/>
            <person name="Nakajima M."/>
            <person name="Narusaka M."/>
            <person name="Seki M."/>
            <person name="Sakurai T."/>
            <person name="Satou M."/>
            <person name="Tamse R."/>
            <person name="Vaysberg M."/>
            <person name="Wallender E.K."/>
            <person name="Wong C."/>
            <person name="Yamamura Y."/>
            <person name="Yuan S."/>
            <person name="Shinozaki K."/>
            <person name="Davis R.W."/>
            <person name="Theologis A."/>
            <person name="Ecker J.R."/>
        </authorList>
    </citation>
    <scope>NUCLEOTIDE SEQUENCE [LARGE SCALE MRNA]</scope>
    <source>
        <strain>cv. Columbia</strain>
    </source>
</reference>
<reference key="4">
    <citation type="submission" date="2002-03" db="EMBL/GenBank/DDBJ databases">
        <title>Full-length cDNA from Arabidopsis thaliana.</title>
        <authorList>
            <person name="Brover V.V."/>
            <person name="Troukhan M.E."/>
            <person name="Alexandrov N.A."/>
            <person name="Lu Y.-P."/>
            <person name="Flavell R.B."/>
            <person name="Feldmann K.A."/>
        </authorList>
    </citation>
    <scope>NUCLEOTIDE SEQUENCE [LARGE SCALE MRNA]</scope>
</reference>
<reference key="5">
    <citation type="journal article" date="2006" name="Plant Physiol.">
        <title>Protein profiling of plastoglobules in chloroplasts and chromoplasts. A surprising site for differential accumulation of metabolic enzymes.</title>
        <authorList>
            <person name="Ytterberg A.J."/>
            <person name="Peltier J.-B."/>
            <person name="van Wijk K.J."/>
        </authorList>
    </citation>
    <scope>IDENTIFICATION BY MASS SPECTROMETRY</scope>
    <scope>SUBCELLULAR LOCATION [LARGE SCALE ANALYSIS]</scope>
    <source>
        <strain>cv. Columbia</strain>
    </source>
</reference>
<reference key="6">
    <citation type="journal article" date="2012" name="Plant Physiol.">
        <title>The functional network of the Arabidopsis plastoglobule proteome based on quantitative proteomics and genome-wide coexpression analysis.</title>
        <authorList>
            <person name="Lundquist P.K."/>
            <person name="Poliakov A."/>
            <person name="Bhuiyan N.H."/>
            <person name="Zybailov B."/>
            <person name="Sun Q."/>
            <person name="van Wijk K.J."/>
        </authorList>
    </citation>
    <scope>IDENTIFICATION BY MASS SPECTROMETRY</scope>
    <scope>SUBCELLULAR LOCATION [LARGE SCALE ANALYSIS]</scope>
    <source>
        <strain>cv. Columbia</strain>
    </source>
</reference>
<protein>
    <recommendedName>
        <fullName>Uncharacterized protein At1g32220, chloroplastic</fullName>
    </recommendedName>
</protein>
<evidence type="ECO:0000255" key="1"/>
<evidence type="ECO:0000269" key="2">
    <source>
    </source>
</evidence>
<evidence type="ECO:0000269" key="3">
    <source>
    </source>
</evidence>
<evidence type="ECO:0000305" key="4"/>